<organism>
    <name type="scientific">Yersinia pseudotuberculosis serotype O:1b (strain IP 31758)</name>
    <dbReference type="NCBI Taxonomy" id="349747"/>
    <lineage>
        <taxon>Bacteria</taxon>
        <taxon>Pseudomonadati</taxon>
        <taxon>Pseudomonadota</taxon>
        <taxon>Gammaproteobacteria</taxon>
        <taxon>Enterobacterales</taxon>
        <taxon>Yersiniaceae</taxon>
        <taxon>Yersinia</taxon>
    </lineage>
</organism>
<name>Y1593_YERP3</name>
<reference key="1">
    <citation type="journal article" date="2007" name="PLoS Genet.">
        <title>The complete genome sequence of Yersinia pseudotuberculosis IP31758, the causative agent of Far East scarlet-like fever.</title>
        <authorList>
            <person name="Eppinger M."/>
            <person name="Rosovitz M.J."/>
            <person name="Fricke W.F."/>
            <person name="Rasko D.A."/>
            <person name="Kokorina G."/>
            <person name="Fayolle C."/>
            <person name="Lindler L.E."/>
            <person name="Carniel E."/>
            <person name="Ravel J."/>
        </authorList>
    </citation>
    <scope>NUCLEOTIDE SEQUENCE [LARGE SCALE GENOMIC DNA]</scope>
    <source>
        <strain>IP 31758</strain>
    </source>
</reference>
<comment type="similarity">
    <text evidence="1">Belongs to the UPF0227 family.</text>
</comment>
<feature type="chain" id="PRO_1000064305" description="UPF0227 protein YpsIP31758_1593">
    <location>
        <begin position="1"/>
        <end position="180"/>
    </location>
</feature>
<accession>A7FH42</accession>
<proteinExistence type="inferred from homology"/>
<dbReference type="EMBL" id="CP000720">
    <property type="protein sequence ID" value="ABS46780.1"/>
    <property type="molecule type" value="Genomic_DNA"/>
</dbReference>
<dbReference type="SMR" id="A7FH42"/>
<dbReference type="ESTHER" id="yerpe-y1616">
    <property type="family name" value="abh_upf00227"/>
</dbReference>
<dbReference type="KEGG" id="ypi:YpsIP31758_1593"/>
<dbReference type="HOGENOM" id="CLU_128769_0_0_6"/>
<dbReference type="Proteomes" id="UP000002412">
    <property type="component" value="Chromosome"/>
</dbReference>
<dbReference type="Gene3D" id="3.40.50.1820">
    <property type="entry name" value="alpha/beta hydrolase"/>
    <property type="match status" value="1"/>
</dbReference>
<dbReference type="HAMAP" id="MF_01047">
    <property type="entry name" value="UPF0227"/>
    <property type="match status" value="1"/>
</dbReference>
<dbReference type="InterPro" id="IPR029058">
    <property type="entry name" value="AB_hydrolase_fold"/>
</dbReference>
<dbReference type="InterPro" id="IPR022987">
    <property type="entry name" value="UPF0227"/>
</dbReference>
<dbReference type="InterPro" id="IPR008886">
    <property type="entry name" value="UPF0227/Esterase_YqiA"/>
</dbReference>
<dbReference type="NCBIfam" id="NF003431">
    <property type="entry name" value="PRK04940.1"/>
    <property type="match status" value="1"/>
</dbReference>
<dbReference type="PANTHER" id="PTHR35602">
    <property type="entry name" value="ESTERASE YQIA-RELATED"/>
    <property type="match status" value="1"/>
</dbReference>
<dbReference type="PANTHER" id="PTHR35602:SF2">
    <property type="entry name" value="UPF0227 PROTEIN YCFP"/>
    <property type="match status" value="1"/>
</dbReference>
<dbReference type="Pfam" id="PF05728">
    <property type="entry name" value="UPF0227"/>
    <property type="match status" value="1"/>
</dbReference>
<dbReference type="SUPFAM" id="SSF53474">
    <property type="entry name" value="alpha/beta-Hydrolases"/>
    <property type="match status" value="1"/>
</dbReference>
<gene>
    <name type="ordered locus">YpsIP31758_1593</name>
</gene>
<sequence>MIVYLHGFDSNSPGNHEKVLQLQFIDPDVRFISYSTLHPRHDMQYLLKEVDKAIQQGGDEKSLICGVGLGGFWAERIGFLCGIRQVAFNPNLYPQENMSGKIDRPEEYIDIASKCIDGFREKNRDRCLVVLSRHDEMLDSQRTAGDLHPYYEIVWDDKQNHKFKDLSPHLQRIKAFKTLG</sequence>
<evidence type="ECO:0000255" key="1">
    <source>
        <dbReference type="HAMAP-Rule" id="MF_01047"/>
    </source>
</evidence>
<protein>
    <recommendedName>
        <fullName evidence="1">UPF0227 protein YpsIP31758_1593</fullName>
    </recommendedName>
</protein>